<dbReference type="EMBL" id="AC106886">
    <property type="status" value="NOT_ANNOTATED_CDS"/>
    <property type="molecule type" value="Genomic_DNA"/>
</dbReference>
<dbReference type="EMBL" id="CH471192">
    <property type="protein sequence ID" value="EAW52212.1"/>
    <property type="molecule type" value="Genomic_DNA"/>
</dbReference>
<dbReference type="CCDS" id="CCDS73870.1"/>
<dbReference type="RefSeq" id="NP_001243758.1">
    <property type="nucleotide sequence ID" value="NM_001256829.2"/>
</dbReference>
<dbReference type="SMR" id="A0A087WTH1"/>
<dbReference type="STRING" id="9606.ENSP00000477871"/>
<dbReference type="BioMuta" id="TMEM265"/>
<dbReference type="MassIVE" id="A0A087WTH1"/>
<dbReference type="PeptideAtlas" id="A0A087WTH1"/>
<dbReference type="DNASU" id="100862671"/>
<dbReference type="Ensembl" id="ENST00000615541.3">
    <property type="protein sequence ID" value="ENSP00000477871.1"/>
    <property type="gene ID" value="ENSG00000281991.2"/>
</dbReference>
<dbReference type="GeneID" id="100862671"/>
<dbReference type="KEGG" id="hsa:100862671"/>
<dbReference type="MANE-Select" id="ENST00000615541.3">
    <property type="protein sequence ID" value="ENSP00000477871.1"/>
    <property type="RefSeq nucleotide sequence ID" value="NM_001256829.2"/>
    <property type="RefSeq protein sequence ID" value="NP_001243758.1"/>
</dbReference>
<dbReference type="UCSC" id="uc031qvt.2">
    <property type="organism name" value="human"/>
</dbReference>
<dbReference type="AGR" id="HGNC:51241"/>
<dbReference type="CTD" id="100862671"/>
<dbReference type="GeneCards" id="TMEM265"/>
<dbReference type="HGNC" id="HGNC:51241">
    <property type="gene designation" value="TMEM265"/>
</dbReference>
<dbReference type="HPA" id="ENSG00000281991">
    <property type="expression patterns" value="Low tissue specificity"/>
</dbReference>
<dbReference type="neXtProt" id="NX_A0A087WTH1"/>
<dbReference type="VEuPathDB" id="HostDB:ENSG00000281991"/>
<dbReference type="GeneTree" id="ENSGT01130000278402"/>
<dbReference type="HOGENOM" id="CLU_2183080_0_0_1"/>
<dbReference type="InParanoid" id="A0A087WTH1"/>
<dbReference type="OMA" id="VICGCSC"/>
<dbReference type="OrthoDB" id="9907795at2759"/>
<dbReference type="PAN-GO" id="A0A087WTH1">
    <property type="GO annotations" value="0 GO annotations based on evolutionary models"/>
</dbReference>
<dbReference type="PathwayCommons" id="A0A087WTH1"/>
<dbReference type="BioGRID-ORCS" id="100862671">
    <property type="hits" value="14 hits in 227 CRISPR screens"/>
</dbReference>
<dbReference type="Pharos" id="A0A087WTH1">
    <property type="development level" value="Tdark"/>
</dbReference>
<dbReference type="PRO" id="PR:A0A087WTH1"/>
<dbReference type="Proteomes" id="UP000005640">
    <property type="component" value="Chromosome 16"/>
</dbReference>
<dbReference type="RNAct" id="A0A087WTH1">
    <property type="molecule type" value="protein"/>
</dbReference>
<dbReference type="Bgee" id="ENSG00000281991">
    <property type="expression patterns" value="Expressed in lower esophagus mucosa and 74 other cell types or tissues"/>
</dbReference>
<dbReference type="GO" id="GO:0016020">
    <property type="term" value="C:membrane"/>
    <property type="evidence" value="ECO:0007669"/>
    <property type="project" value="UniProtKB-SubCell"/>
</dbReference>
<dbReference type="InterPro" id="IPR007593">
    <property type="entry name" value="CD225/Dispanin_fam"/>
</dbReference>
<dbReference type="Pfam" id="PF04505">
    <property type="entry name" value="CD225"/>
    <property type="match status" value="1"/>
</dbReference>
<reference key="1">
    <citation type="journal article" date="2004" name="Nature">
        <title>The sequence and analysis of duplication-rich human chromosome 16.</title>
        <authorList>
            <person name="Martin J."/>
            <person name="Han C."/>
            <person name="Gordon L.A."/>
            <person name="Terry A."/>
            <person name="Prabhakar S."/>
            <person name="She X."/>
            <person name="Xie G."/>
            <person name="Hellsten U."/>
            <person name="Chan Y.M."/>
            <person name="Altherr M."/>
            <person name="Couronne O."/>
            <person name="Aerts A."/>
            <person name="Bajorek E."/>
            <person name="Black S."/>
            <person name="Blumer H."/>
            <person name="Branscomb E."/>
            <person name="Brown N.C."/>
            <person name="Bruno W.J."/>
            <person name="Buckingham J.M."/>
            <person name="Callen D.F."/>
            <person name="Campbell C.S."/>
            <person name="Campbell M.L."/>
            <person name="Campbell E.W."/>
            <person name="Caoile C."/>
            <person name="Challacombe J.F."/>
            <person name="Chasteen L.A."/>
            <person name="Chertkov O."/>
            <person name="Chi H.C."/>
            <person name="Christensen M."/>
            <person name="Clark L.M."/>
            <person name="Cohn J.D."/>
            <person name="Denys M."/>
            <person name="Detter J.C."/>
            <person name="Dickson M."/>
            <person name="Dimitrijevic-Bussod M."/>
            <person name="Escobar J."/>
            <person name="Fawcett J.J."/>
            <person name="Flowers D."/>
            <person name="Fotopulos D."/>
            <person name="Glavina T."/>
            <person name="Gomez M."/>
            <person name="Gonzales E."/>
            <person name="Goodstein D."/>
            <person name="Goodwin L.A."/>
            <person name="Grady D.L."/>
            <person name="Grigoriev I."/>
            <person name="Groza M."/>
            <person name="Hammon N."/>
            <person name="Hawkins T."/>
            <person name="Haydu L."/>
            <person name="Hildebrand C.E."/>
            <person name="Huang W."/>
            <person name="Israni S."/>
            <person name="Jett J."/>
            <person name="Jewett P.B."/>
            <person name="Kadner K."/>
            <person name="Kimball H."/>
            <person name="Kobayashi A."/>
            <person name="Krawczyk M.-C."/>
            <person name="Leyba T."/>
            <person name="Longmire J.L."/>
            <person name="Lopez F."/>
            <person name="Lou Y."/>
            <person name="Lowry S."/>
            <person name="Ludeman T."/>
            <person name="Manohar C.F."/>
            <person name="Mark G.A."/>
            <person name="McMurray K.L."/>
            <person name="Meincke L.J."/>
            <person name="Morgan J."/>
            <person name="Moyzis R.K."/>
            <person name="Mundt M.O."/>
            <person name="Munk A.C."/>
            <person name="Nandkeshwar R.D."/>
            <person name="Pitluck S."/>
            <person name="Pollard M."/>
            <person name="Predki P."/>
            <person name="Parson-Quintana B."/>
            <person name="Ramirez L."/>
            <person name="Rash S."/>
            <person name="Retterer J."/>
            <person name="Ricke D.O."/>
            <person name="Robinson D.L."/>
            <person name="Rodriguez A."/>
            <person name="Salamov A."/>
            <person name="Saunders E.H."/>
            <person name="Scott D."/>
            <person name="Shough T."/>
            <person name="Stallings R.L."/>
            <person name="Stalvey M."/>
            <person name="Sutherland R.D."/>
            <person name="Tapia R."/>
            <person name="Tesmer J.G."/>
            <person name="Thayer N."/>
            <person name="Thompson L.S."/>
            <person name="Tice H."/>
            <person name="Torney D.C."/>
            <person name="Tran-Gyamfi M."/>
            <person name="Tsai M."/>
            <person name="Ulanovsky L.E."/>
            <person name="Ustaszewska A."/>
            <person name="Vo N."/>
            <person name="White P.S."/>
            <person name="Williams A.L."/>
            <person name="Wills P.L."/>
            <person name="Wu J.-R."/>
            <person name="Wu K."/>
            <person name="Yang J."/>
            <person name="DeJong P."/>
            <person name="Bruce D."/>
            <person name="Doggett N.A."/>
            <person name="Deaven L."/>
            <person name="Schmutz J."/>
            <person name="Grimwood J."/>
            <person name="Richardson P."/>
            <person name="Rokhsar D.S."/>
            <person name="Eichler E.E."/>
            <person name="Gilna P."/>
            <person name="Lucas S.M."/>
            <person name="Myers R.M."/>
            <person name="Rubin E.M."/>
            <person name="Pennacchio L.A."/>
        </authorList>
    </citation>
    <scope>NUCLEOTIDE SEQUENCE [LARGE SCALE GENOMIC DNA]</scope>
</reference>
<reference key="2">
    <citation type="submission" date="2005-07" db="EMBL/GenBank/DDBJ databases">
        <authorList>
            <person name="Mural R.J."/>
            <person name="Istrail S."/>
            <person name="Sutton G.G."/>
            <person name="Florea L."/>
            <person name="Halpern A.L."/>
            <person name="Mobarry C.M."/>
            <person name="Lippert R."/>
            <person name="Walenz B."/>
            <person name="Shatkay H."/>
            <person name="Dew I."/>
            <person name="Miller J.R."/>
            <person name="Flanigan M.J."/>
            <person name="Edwards N.J."/>
            <person name="Bolanos R."/>
            <person name="Fasulo D."/>
            <person name="Halldorsson B.V."/>
            <person name="Hannenhalli S."/>
            <person name="Turner R."/>
            <person name="Yooseph S."/>
            <person name="Lu F."/>
            <person name="Nusskern D.R."/>
            <person name="Shue B.C."/>
            <person name="Zheng X.H."/>
            <person name="Zhong F."/>
            <person name="Delcher A.L."/>
            <person name="Huson D.H."/>
            <person name="Kravitz S.A."/>
            <person name="Mouchard L."/>
            <person name="Reinert K."/>
            <person name="Remington K.A."/>
            <person name="Clark A.G."/>
            <person name="Waterman M.S."/>
            <person name="Eichler E.E."/>
            <person name="Adams M.D."/>
            <person name="Hunkapiller M.W."/>
            <person name="Myers E.W."/>
            <person name="Venter J.C."/>
        </authorList>
    </citation>
    <scope>NUCLEOTIDE SEQUENCE [LARGE SCALE GENOMIC DNA]</scope>
</reference>
<keyword id="KW-0472">Membrane</keyword>
<keyword id="KW-1185">Reference proteome</keyword>
<keyword id="KW-0812">Transmembrane</keyword>
<keyword id="KW-1133">Transmembrane helix</keyword>
<organism>
    <name type="scientific">Homo sapiens</name>
    <name type="common">Human</name>
    <dbReference type="NCBI Taxonomy" id="9606"/>
    <lineage>
        <taxon>Eukaryota</taxon>
        <taxon>Metazoa</taxon>
        <taxon>Chordata</taxon>
        <taxon>Craniata</taxon>
        <taxon>Vertebrata</taxon>
        <taxon>Euteleostomi</taxon>
        <taxon>Mammalia</taxon>
        <taxon>Eutheria</taxon>
        <taxon>Euarchontoglires</taxon>
        <taxon>Primates</taxon>
        <taxon>Haplorrhini</taxon>
        <taxon>Catarrhini</taxon>
        <taxon>Hominidae</taxon>
        <taxon>Homo</taxon>
    </lineage>
</organism>
<feature type="chain" id="PRO_0000432548" description="Transmembrane protein 265">
    <location>
        <begin position="1"/>
        <end position="108"/>
    </location>
</feature>
<feature type="transmembrane region" description="Helical; Name=1" evidence="1">
    <location>
        <begin position="34"/>
        <end position="54"/>
    </location>
</feature>
<feature type="transmembrane region" description="Helical; Name=2" evidence="1">
    <location>
        <begin position="78"/>
        <end position="98"/>
    </location>
</feature>
<sequence>MEDEEKAVEILGNTEAAHPPSPIRCCWLRLRCLAATSIICGCSCLGVMALVFAIKAEERHKAGRSEEAVRWGARARKLILASFAVWLAVLILGPLLLWLLSYAIAQAE</sequence>
<protein>
    <recommendedName>
        <fullName evidence="3">Transmembrane protein 265</fullName>
    </recommendedName>
</protein>
<name>TM265_HUMAN</name>
<evidence type="ECO:0000255" key="1"/>
<evidence type="ECO:0000305" key="2"/>
<evidence type="ECO:0000312" key="3">
    <source>
        <dbReference type="HGNC" id="HGNC:51241"/>
    </source>
</evidence>
<proteinExistence type="inferred from homology"/>
<accession>A0A087WTH1</accession>
<gene>
    <name evidence="3" type="primary">TMEM265</name>
</gene>
<comment type="subcellular location">
    <subcellularLocation>
        <location evidence="1">Membrane</location>
        <topology evidence="1">Multi-pass membrane protein</topology>
    </subcellularLocation>
</comment>
<comment type="similarity">
    <text evidence="2">Belongs to the CD225/Dispanin family.</text>
</comment>